<reference key="1">
    <citation type="journal article" date="2009" name="J. Bacteriol.">
        <title>The genome of Burkholderia cenocepacia J2315, an epidemic pathogen of cystic fibrosis patients.</title>
        <authorList>
            <person name="Holden M.T."/>
            <person name="Seth-Smith H.M."/>
            <person name="Crossman L.C."/>
            <person name="Sebaihia M."/>
            <person name="Bentley S.D."/>
            <person name="Cerdeno-Tarraga A.M."/>
            <person name="Thomson N.R."/>
            <person name="Bason N."/>
            <person name="Quail M.A."/>
            <person name="Sharp S."/>
            <person name="Cherevach I."/>
            <person name="Churcher C."/>
            <person name="Goodhead I."/>
            <person name="Hauser H."/>
            <person name="Holroyd N."/>
            <person name="Mungall K."/>
            <person name="Scott P."/>
            <person name="Walker D."/>
            <person name="White B."/>
            <person name="Rose H."/>
            <person name="Iversen P."/>
            <person name="Mil-Homens D."/>
            <person name="Rocha E.P."/>
            <person name="Fialho A.M."/>
            <person name="Baldwin A."/>
            <person name="Dowson C."/>
            <person name="Barrell B.G."/>
            <person name="Govan J.R."/>
            <person name="Vandamme P."/>
            <person name="Hart C.A."/>
            <person name="Mahenthiralingam E."/>
            <person name="Parkhill J."/>
        </authorList>
    </citation>
    <scope>NUCLEOTIDE SEQUENCE [LARGE SCALE GENOMIC DNA]</scope>
    <source>
        <strain>ATCC BAA-245 / DSM 16553 / LMG 16656 / NCTC 13227 / J2315 / CF5610</strain>
    </source>
</reference>
<comment type="function">
    <text evidence="1">GTPase that plays an essential role in the late steps of ribosome biogenesis.</text>
</comment>
<comment type="subunit">
    <text evidence="1">Associates with the 50S ribosomal subunit.</text>
</comment>
<comment type="similarity">
    <text evidence="1">Belongs to the TRAFAC class TrmE-Era-EngA-EngB-Septin-like GTPase superfamily. EngA (Der) GTPase family.</text>
</comment>
<proteinExistence type="inferred from homology"/>
<name>DER_BURCJ</name>
<evidence type="ECO:0000255" key="1">
    <source>
        <dbReference type="HAMAP-Rule" id="MF_00195"/>
    </source>
</evidence>
<organism>
    <name type="scientific">Burkholderia cenocepacia (strain ATCC BAA-245 / DSM 16553 / LMG 16656 / NCTC 13227 / J2315 / CF5610)</name>
    <name type="common">Burkholderia cepacia (strain J2315)</name>
    <dbReference type="NCBI Taxonomy" id="216591"/>
    <lineage>
        <taxon>Bacteria</taxon>
        <taxon>Pseudomonadati</taxon>
        <taxon>Pseudomonadota</taxon>
        <taxon>Betaproteobacteria</taxon>
        <taxon>Burkholderiales</taxon>
        <taxon>Burkholderiaceae</taxon>
        <taxon>Burkholderia</taxon>
        <taxon>Burkholderia cepacia complex</taxon>
    </lineage>
</organism>
<feature type="chain" id="PRO_1000099096" description="GTPase Der">
    <location>
        <begin position="1"/>
        <end position="445"/>
    </location>
</feature>
<feature type="domain" description="EngA-type G 1">
    <location>
        <begin position="3"/>
        <end position="167"/>
    </location>
</feature>
<feature type="domain" description="EngA-type G 2">
    <location>
        <begin position="180"/>
        <end position="353"/>
    </location>
</feature>
<feature type="domain" description="KH-like" evidence="1">
    <location>
        <begin position="354"/>
        <end position="438"/>
    </location>
</feature>
<feature type="binding site" evidence="1">
    <location>
        <begin position="9"/>
        <end position="16"/>
    </location>
    <ligand>
        <name>GTP</name>
        <dbReference type="ChEBI" id="CHEBI:37565"/>
        <label>1</label>
    </ligand>
</feature>
<feature type="binding site" evidence="1">
    <location>
        <begin position="56"/>
        <end position="60"/>
    </location>
    <ligand>
        <name>GTP</name>
        <dbReference type="ChEBI" id="CHEBI:37565"/>
        <label>1</label>
    </ligand>
</feature>
<feature type="binding site" evidence="1">
    <location>
        <begin position="119"/>
        <end position="122"/>
    </location>
    <ligand>
        <name>GTP</name>
        <dbReference type="ChEBI" id="CHEBI:37565"/>
        <label>1</label>
    </ligand>
</feature>
<feature type="binding site" evidence="1">
    <location>
        <begin position="186"/>
        <end position="193"/>
    </location>
    <ligand>
        <name>GTP</name>
        <dbReference type="ChEBI" id="CHEBI:37565"/>
        <label>2</label>
    </ligand>
</feature>
<feature type="binding site" evidence="1">
    <location>
        <begin position="233"/>
        <end position="237"/>
    </location>
    <ligand>
        <name>GTP</name>
        <dbReference type="ChEBI" id="CHEBI:37565"/>
        <label>2</label>
    </ligand>
</feature>
<feature type="binding site" evidence="1">
    <location>
        <begin position="298"/>
        <end position="301"/>
    </location>
    <ligand>
        <name>GTP</name>
        <dbReference type="ChEBI" id="CHEBI:37565"/>
        <label>2</label>
    </ligand>
</feature>
<protein>
    <recommendedName>
        <fullName evidence="1">GTPase Der</fullName>
    </recommendedName>
    <alternativeName>
        <fullName evidence="1">GTP-binding protein EngA</fullName>
    </alternativeName>
</protein>
<accession>B4EAW5</accession>
<keyword id="KW-0342">GTP-binding</keyword>
<keyword id="KW-0547">Nucleotide-binding</keyword>
<keyword id="KW-0677">Repeat</keyword>
<keyword id="KW-0690">Ribosome biogenesis</keyword>
<sequence>MKPVIALVGRPNVGKSTLFNRLTRSRDALVADLPGLTRDRHYGEGRVGERPYLVVDTGGFEPVAKDGILHEMARQTRQAVEEADVVVFIVDGRNGLAPQDKSIADYLRKTGRPIFLVVNKAEGMKYTAVATDFYELGLGDPRAISAAHGDGVTDMINEALEVAYAGQPEEAEEDDPSRGIKIAIVGRPNVGKSTLVNALIGEDRVIAFDMPGTTRDSIYVDFERNGKKYTLIDTAGLRRRGKVFEAIEKFSVVKTLQSISDANVVILLLDAQQDISDQDAHIAGFVVEQGRALVIGVNKWDGFDDHARDRAKADLTRKLKFLDFAKSHFISAAKKTGIGALMRSVDDAYAAAMSKLPTPKLTRALIEAVEFQQPRRRGPVRPKLRYAHQGGQNPPIIVIHGNALDAVTETYKRYLENRFRETFSLTGTPLRIEFRSSNNPYADKG</sequence>
<gene>
    <name evidence="1" type="primary">der</name>
    <name type="synonym">engA</name>
    <name type="ordered locus">BceJ2315_18430</name>
    <name type="ORF">BCAL1880</name>
</gene>
<dbReference type="EMBL" id="AM747720">
    <property type="protein sequence ID" value="CAR52180.1"/>
    <property type="molecule type" value="Genomic_DNA"/>
</dbReference>
<dbReference type="RefSeq" id="WP_012492655.1">
    <property type="nucleotide sequence ID" value="NC_011000.1"/>
</dbReference>
<dbReference type="SMR" id="B4EAW5"/>
<dbReference type="KEGG" id="bcj:BCAL1880"/>
<dbReference type="eggNOG" id="COG1160">
    <property type="taxonomic scope" value="Bacteria"/>
</dbReference>
<dbReference type="HOGENOM" id="CLU_016077_6_2_4"/>
<dbReference type="BioCyc" id="BCEN216591:G1G1V-2071-MONOMER"/>
<dbReference type="Proteomes" id="UP000001035">
    <property type="component" value="Chromosome 1"/>
</dbReference>
<dbReference type="GO" id="GO:0016887">
    <property type="term" value="F:ATP hydrolysis activity"/>
    <property type="evidence" value="ECO:0007669"/>
    <property type="project" value="InterPro"/>
</dbReference>
<dbReference type="GO" id="GO:0005525">
    <property type="term" value="F:GTP binding"/>
    <property type="evidence" value="ECO:0007669"/>
    <property type="project" value="UniProtKB-UniRule"/>
</dbReference>
<dbReference type="GO" id="GO:0043022">
    <property type="term" value="F:ribosome binding"/>
    <property type="evidence" value="ECO:0007669"/>
    <property type="project" value="TreeGrafter"/>
</dbReference>
<dbReference type="GO" id="GO:0042254">
    <property type="term" value="P:ribosome biogenesis"/>
    <property type="evidence" value="ECO:0007669"/>
    <property type="project" value="UniProtKB-KW"/>
</dbReference>
<dbReference type="CDD" id="cd01894">
    <property type="entry name" value="EngA1"/>
    <property type="match status" value="1"/>
</dbReference>
<dbReference type="CDD" id="cd01895">
    <property type="entry name" value="EngA2"/>
    <property type="match status" value="1"/>
</dbReference>
<dbReference type="FunFam" id="3.30.300.20:FF:000004">
    <property type="entry name" value="GTPase Der"/>
    <property type="match status" value="1"/>
</dbReference>
<dbReference type="FunFam" id="3.40.50.300:FF:000040">
    <property type="entry name" value="GTPase Der"/>
    <property type="match status" value="1"/>
</dbReference>
<dbReference type="FunFam" id="3.40.50.300:FF:000057">
    <property type="entry name" value="GTPase Der"/>
    <property type="match status" value="1"/>
</dbReference>
<dbReference type="Gene3D" id="3.30.300.20">
    <property type="match status" value="1"/>
</dbReference>
<dbReference type="Gene3D" id="3.40.50.300">
    <property type="entry name" value="P-loop containing nucleotide triphosphate hydrolases"/>
    <property type="match status" value="2"/>
</dbReference>
<dbReference type="HAMAP" id="MF_00195">
    <property type="entry name" value="GTPase_Der"/>
    <property type="match status" value="1"/>
</dbReference>
<dbReference type="InterPro" id="IPR003593">
    <property type="entry name" value="AAA+_ATPase"/>
</dbReference>
<dbReference type="InterPro" id="IPR031166">
    <property type="entry name" value="G_ENGA"/>
</dbReference>
<dbReference type="InterPro" id="IPR006073">
    <property type="entry name" value="GTP-bd"/>
</dbReference>
<dbReference type="InterPro" id="IPR016484">
    <property type="entry name" value="GTPase_Der"/>
</dbReference>
<dbReference type="InterPro" id="IPR032859">
    <property type="entry name" value="KH_dom-like"/>
</dbReference>
<dbReference type="InterPro" id="IPR015946">
    <property type="entry name" value="KH_dom-like_a/b"/>
</dbReference>
<dbReference type="InterPro" id="IPR027417">
    <property type="entry name" value="P-loop_NTPase"/>
</dbReference>
<dbReference type="InterPro" id="IPR005225">
    <property type="entry name" value="Small_GTP-bd"/>
</dbReference>
<dbReference type="NCBIfam" id="TIGR03594">
    <property type="entry name" value="GTPase_EngA"/>
    <property type="match status" value="1"/>
</dbReference>
<dbReference type="NCBIfam" id="TIGR00231">
    <property type="entry name" value="small_GTP"/>
    <property type="match status" value="2"/>
</dbReference>
<dbReference type="PANTHER" id="PTHR43834">
    <property type="entry name" value="GTPASE DER"/>
    <property type="match status" value="1"/>
</dbReference>
<dbReference type="PANTHER" id="PTHR43834:SF6">
    <property type="entry name" value="GTPASE DER"/>
    <property type="match status" value="1"/>
</dbReference>
<dbReference type="Pfam" id="PF14714">
    <property type="entry name" value="KH_dom-like"/>
    <property type="match status" value="1"/>
</dbReference>
<dbReference type="Pfam" id="PF01926">
    <property type="entry name" value="MMR_HSR1"/>
    <property type="match status" value="2"/>
</dbReference>
<dbReference type="PIRSF" id="PIRSF006485">
    <property type="entry name" value="GTP-binding_EngA"/>
    <property type="match status" value="1"/>
</dbReference>
<dbReference type="PRINTS" id="PR00326">
    <property type="entry name" value="GTP1OBG"/>
</dbReference>
<dbReference type="SMART" id="SM00382">
    <property type="entry name" value="AAA"/>
    <property type="match status" value="2"/>
</dbReference>
<dbReference type="SUPFAM" id="SSF52540">
    <property type="entry name" value="P-loop containing nucleoside triphosphate hydrolases"/>
    <property type="match status" value="2"/>
</dbReference>
<dbReference type="PROSITE" id="PS51712">
    <property type="entry name" value="G_ENGA"/>
    <property type="match status" value="2"/>
</dbReference>